<feature type="transit peptide" description="Mitochondrion" evidence="1">
    <location>
        <begin position="1"/>
        <end position="27"/>
    </location>
</feature>
<feature type="chain" id="PRO_0000290034" description="Glutamyl-tRNA(Gln) amidotransferase subunit C, mitochondrial">
    <location>
        <begin position="28"/>
        <end position="136"/>
    </location>
</feature>
<proteinExistence type="evidence at transcript level"/>
<sequence length="136" mass="15176">MWARAVHLGLRAAARGRRGFTSKADPQGSGRVTGELIQHLERLSLVDFGSQEAVARLEKAIAFADRLRAVNTDGVEPMESVLEDRCLYLRSDNVVEGSCAEELLQNSHRVVEEYFVAPPGNISWSKLDEKQPFSHR</sequence>
<gene>
    <name evidence="1" type="primary">GATC</name>
</gene>
<name>GATC_BOVIN</name>
<evidence type="ECO:0000255" key="1">
    <source>
        <dbReference type="HAMAP-Rule" id="MF_03149"/>
    </source>
</evidence>
<comment type="function">
    <text evidence="1">Allows the formation of correctly charged Gln-tRNA(Gln) through the transamidation of misacylated Glu-tRNA(Gln) in the mitochondria. The reaction takes place in the presence of glutamine and ATP through an activated gamma-phospho-Glu-tRNA(Gln).</text>
</comment>
<comment type="catalytic activity">
    <reaction evidence="1">
        <text>L-glutamyl-tRNA(Gln) + L-glutamine + ATP + H2O = L-glutaminyl-tRNA(Gln) + L-glutamate + ADP + phosphate + H(+)</text>
        <dbReference type="Rhea" id="RHEA:17521"/>
        <dbReference type="Rhea" id="RHEA-COMP:9681"/>
        <dbReference type="Rhea" id="RHEA-COMP:9684"/>
        <dbReference type="ChEBI" id="CHEBI:15377"/>
        <dbReference type="ChEBI" id="CHEBI:15378"/>
        <dbReference type="ChEBI" id="CHEBI:29985"/>
        <dbReference type="ChEBI" id="CHEBI:30616"/>
        <dbReference type="ChEBI" id="CHEBI:43474"/>
        <dbReference type="ChEBI" id="CHEBI:58359"/>
        <dbReference type="ChEBI" id="CHEBI:78520"/>
        <dbReference type="ChEBI" id="CHEBI:78521"/>
        <dbReference type="ChEBI" id="CHEBI:456216"/>
    </reaction>
</comment>
<comment type="subunit">
    <text evidence="1">Subunit of the heterotrimeric GatCAB amidotransferase (AdT) complex, composed of A (QRSL1), B (GATB) and C (GATC) subunits.</text>
</comment>
<comment type="subcellular location">
    <subcellularLocation>
        <location evidence="1">Mitochondrion</location>
    </subcellularLocation>
</comment>
<comment type="similarity">
    <text evidence="1">Belongs to the GatC family.</text>
</comment>
<keyword id="KW-0067">ATP-binding</keyword>
<keyword id="KW-0436">Ligase</keyword>
<keyword id="KW-0496">Mitochondrion</keyword>
<keyword id="KW-0547">Nucleotide-binding</keyword>
<keyword id="KW-0648">Protein biosynthesis</keyword>
<keyword id="KW-1185">Reference proteome</keyword>
<keyword id="KW-0809">Transit peptide</keyword>
<reference key="1">
    <citation type="submission" date="2006-01" db="EMBL/GenBank/DDBJ databases">
        <authorList>
            <consortium name="NIH - Mammalian Gene Collection (MGC) project"/>
        </authorList>
    </citation>
    <scope>NUCLEOTIDE SEQUENCE [LARGE SCALE MRNA]</scope>
    <source>
        <strain>Hereford</strain>
        <tissue>Testis</tissue>
    </source>
</reference>
<dbReference type="EC" id="6.3.5.-" evidence="1"/>
<dbReference type="EMBL" id="BC112661">
    <property type="protein sequence ID" value="AAI12662.1"/>
    <property type="molecule type" value="mRNA"/>
</dbReference>
<dbReference type="RefSeq" id="NP_001040027.1">
    <property type="nucleotide sequence ID" value="NM_001046562.1"/>
</dbReference>
<dbReference type="SMR" id="Q2KIF1"/>
<dbReference type="FunCoup" id="Q2KIF1">
    <property type="interactions" value="1813"/>
</dbReference>
<dbReference type="STRING" id="9913.ENSBTAP00000058227"/>
<dbReference type="PaxDb" id="9913-ENSBTAP00000016996"/>
<dbReference type="Ensembl" id="ENSBTAT00000016996.3">
    <property type="protein sequence ID" value="ENSBTAP00000016996.2"/>
    <property type="gene ID" value="ENSBTAG00000012791.5"/>
</dbReference>
<dbReference type="GeneID" id="615845"/>
<dbReference type="KEGG" id="bta:615845"/>
<dbReference type="CTD" id="283459"/>
<dbReference type="VEuPathDB" id="HostDB:ENSBTAG00000012791"/>
<dbReference type="eggNOG" id="KOG4247">
    <property type="taxonomic scope" value="Eukaryota"/>
</dbReference>
<dbReference type="GeneTree" id="ENSGT00390000018351"/>
<dbReference type="HOGENOM" id="CLU_105899_0_2_1"/>
<dbReference type="InParanoid" id="Q2KIF1"/>
<dbReference type="OMA" id="RCAKRTD"/>
<dbReference type="OrthoDB" id="5394539at2759"/>
<dbReference type="TreeFam" id="TF106133"/>
<dbReference type="Proteomes" id="UP000009136">
    <property type="component" value="Chromosome 17"/>
</dbReference>
<dbReference type="Bgee" id="ENSBTAG00000012791">
    <property type="expression patterns" value="Expressed in triceps brachii and 105 other cell types or tissues"/>
</dbReference>
<dbReference type="GO" id="GO:0030956">
    <property type="term" value="C:glutamyl-tRNA(Gln) amidotransferase complex"/>
    <property type="evidence" value="ECO:0000318"/>
    <property type="project" value="GO_Central"/>
</dbReference>
<dbReference type="GO" id="GO:0005739">
    <property type="term" value="C:mitochondrion"/>
    <property type="evidence" value="ECO:0000318"/>
    <property type="project" value="GO_Central"/>
</dbReference>
<dbReference type="GO" id="GO:0005524">
    <property type="term" value="F:ATP binding"/>
    <property type="evidence" value="ECO:0007669"/>
    <property type="project" value="UniProtKB-KW"/>
</dbReference>
<dbReference type="GO" id="GO:0050567">
    <property type="term" value="F:glutaminyl-tRNA synthase (glutamine-hydrolyzing) activity"/>
    <property type="evidence" value="ECO:0007669"/>
    <property type="project" value="UniProtKB-UniRule"/>
</dbReference>
<dbReference type="GO" id="GO:0070681">
    <property type="term" value="P:glutaminyl-tRNAGln biosynthesis via transamidation"/>
    <property type="evidence" value="ECO:0000318"/>
    <property type="project" value="GO_Central"/>
</dbReference>
<dbReference type="GO" id="GO:0032543">
    <property type="term" value="P:mitochondrial translation"/>
    <property type="evidence" value="ECO:0000318"/>
    <property type="project" value="GO_Central"/>
</dbReference>
<dbReference type="GO" id="GO:0006450">
    <property type="term" value="P:regulation of translational fidelity"/>
    <property type="evidence" value="ECO:0007669"/>
    <property type="project" value="InterPro"/>
</dbReference>
<dbReference type="HAMAP" id="MF_00122">
    <property type="entry name" value="GatC"/>
    <property type="match status" value="1"/>
</dbReference>
<dbReference type="InterPro" id="IPR036113">
    <property type="entry name" value="Asp/Glu-ADT_sf_sub_c"/>
</dbReference>
<dbReference type="InterPro" id="IPR003837">
    <property type="entry name" value="GatC"/>
</dbReference>
<dbReference type="NCBIfam" id="TIGR00135">
    <property type="entry name" value="gatC"/>
    <property type="match status" value="1"/>
</dbReference>
<dbReference type="PANTHER" id="PTHR15004">
    <property type="entry name" value="GLUTAMYL-TRNA(GLN) AMIDOTRANSFERASE SUBUNIT C, MITOCHONDRIAL"/>
    <property type="match status" value="1"/>
</dbReference>
<dbReference type="PANTHER" id="PTHR15004:SF0">
    <property type="entry name" value="GLUTAMYL-TRNA(GLN) AMIDOTRANSFERASE SUBUNIT C, MITOCHONDRIAL"/>
    <property type="match status" value="1"/>
</dbReference>
<dbReference type="Pfam" id="PF02686">
    <property type="entry name" value="GatC"/>
    <property type="match status" value="1"/>
</dbReference>
<dbReference type="SUPFAM" id="SSF141000">
    <property type="entry name" value="Glu-tRNAGln amidotransferase C subunit"/>
    <property type="match status" value="1"/>
</dbReference>
<organism>
    <name type="scientific">Bos taurus</name>
    <name type="common">Bovine</name>
    <dbReference type="NCBI Taxonomy" id="9913"/>
    <lineage>
        <taxon>Eukaryota</taxon>
        <taxon>Metazoa</taxon>
        <taxon>Chordata</taxon>
        <taxon>Craniata</taxon>
        <taxon>Vertebrata</taxon>
        <taxon>Euteleostomi</taxon>
        <taxon>Mammalia</taxon>
        <taxon>Eutheria</taxon>
        <taxon>Laurasiatheria</taxon>
        <taxon>Artiodactyla</taxon>
        <taxon>Ruminantia</taxon>
        <taxon>Pecora</taxon>
        <taxon>Bovidae</taxon>
        <taxon>Bovinae</taxon>
        <taxon>Bos</taxon>
    </lineage>
</organism>
<protein>
    <recommendedName>
        <fullName evidence="1">Glutamyl-tRNA(Gln) amidotransferase subunit C, mitochondrial</fullName>
        <shortName evidence="1">Glu-AdT subunit C</shortName>
        <ecNumber evidence="1">6.3.5.-</ecNumber>
    </recommendedName>
</protein>
<accession>Q2KIF1</accession>